<dbReference type="EC" id="5.3.1.24" evidence="1"/>
<dbReference type="EMBL" id="CP000482">
    <property type="protein sequence ID" value="ABK98912.1"/>
    <property type="molecule type" value="Genomic_DNA"/>
</dbReference>
<dbReference type="RefSeq" id="WP_011735214.1">
    <property type="nucleotide sequence ID" value="NC_008609.1"/>
</dbReference>
<dbReference type="SMR" id="A1ANJ2"/>
<dbReference type="STRING" id="338966.Ppro_1292"/>
<dbReference type="KEGG" id="ppd:Ppro_1292"/>
<dbReference type="eggNOG" id="COG0135">
    <property type="taxonomic scope" value="Bacteria"/>
</dbReference>
<dbReference type="HOGENOM" id="CLU_076364_2_0_7"/>
<dbReference type="OrthoDB" id="9796196at2"/>
<dbReference type="UniPathway" id="UPA00035">
    <property type="reaction ID" value="UER00042"/>
</dbReference>
<dbReference type="Proteomes" id="UP000006732">
    <property type="component" value="Chromosome"/>
</dbReference>
<dbReference type="GO" id="GO:0004640">
    <property type="term" value="F:phosphoribosylanthranilate isomerase activity"/>
    <property type="evidence" value="ECO:0007669"/>
    <property type="project" value="UniProtKB-UniRule"/>
</dbReference>
<dbReference type="GO" id="GO:0000162">
    <property type="term" value="P:L-tryptophan biosynthetic process"/>
    <property type="evidence" value="ECO:0007669"/>
    <property type="project" value="UniProtKB-UniRule"/>
</dbReference>
<dbReference type="CDD" id="cd00405">
    <property type="entry name" value="PRAI"/>
    <property type="match status" value="1"/>
</dbReference>
<dbReference type="FunFam" id="3.20.20.70:FF:000075">
    <property type="entry name" value="Tryptophan biosynthesis protein TRP1"/>
    <property type="match status" value="1"/>
</dbReference>
<dbReference type="Gene3D" id="3.20.20.70">
    <property type="entry name" value="Aldolase class I"/>
    <property type="match status" value="1"/>
</dbReference>
<dbReference type="HAMAP" id="MF_00135">
    <property type="entry name" value="PRAI"/>
    <property type="match status" value="1"/>
</dbReference>
<dbReference type="InterPro" id="IPR013785">
    <property type="entry name" value="Aldolase_TIM"/>
</dbReference>
<dbReference type="InterPro" id="IPR001240">
    <property type="entry name" value="PRAI_dom"/>
</dbReference>
<dbReference type="InterPro" id="IPR011060">
    <property type="entry name" value="RibuloseP-bd_barrel"/>
</dbReference>
<dbReference type="InterPro" id="IPR044643">
    <property type="entry name" value="TrpF_fam"/>
</dbReference>
<dbReference type="NCBIfam" id="NF002298">
    <property type="entry name" value="PRK01222.1-4"/>
    <property type="match status" value="1"/>
</dbReference>
<dbReference type="PANTHER" id="PTHR42894">
    <property type="entry name" value="N-(5'-PHOSPHORIBOSYL)ANTHRANILATE ISOMERASE"/>
    <property type="match status" value="1"/>
</dbReference>
<dbReference type="PANTHER" id="PTHR42894:SF1">
    <property type="entry name" value="N-(5'-PHOSPHORIBOSYL)ANTHRANILATE ISOMERASE"/>
    <property type="match status" value="1"/>
</dbReference>
<dbReference type="Pfam" id="PF00697">
    <property type="entry name" value="PRAI"/>
    <property type="match status" value="1"/>
</dbReference>
<dbReference type="SUPFAM" id="SSF51366">
    <property type="entry name" value="Ribulose-phoshate binding barrel"/>
    <property type="match status" value="1"/>
</dbReference>
<name>TRPF_PELPD</name>
<sequence>MIKVKICGITNLEDALLAVDAGADALGFVFCEASPRSVTPEQAASIIRQLPPFIQTIGLFVNEPLAVINQTADACGLDIVQLHGEEAPQFCAGVKRRVIKALRVRDESSLEPMTSYRVSAFLLDAWSPSAHGGTGRTFNWDIAAGAAAKNRIVLAGGLTADNIAAAIRKVHPYGVDVSSGVEAAPGKKDAVKIREFIRIAKETRSESTR</sequence>
<protein>
    <recommendedName>
        <fullName evidence="1">N-(5'-phosphoribosyl)anthranilate isomerase</fullName>
        <shortName evidence="1">PRAI</shortName>
        <ecNumber evidence="1">5.3.1.24</ecNumber>
    </recommendedName>
</protein>
<organism>
    <name type="scientific">Pelobacter propionicus (strain DSM 2379 / NBRC 103807 / OttBd1)</name>
    <dbReference type="NCBI Taxonomy" id="338966"/>
    <lineage>
        <taxon>Bacteria</taxon>
        <taxon>Pseudomonadati</taxon>
        <taxon>Thermodesulfobacteriota</taxon>
        <taxon>Desulfuromonadia</taxon>
        <taxon>Desulfuromonadales</taxon>
        <taxon>Desulfuromonadaceae</taxon>
        <taxon>Pelobacter</taxon>
    </lineage>
</organism>
<gene>
    <name evidence="1" type="primary">trpF</name>
    <name type="ordered locus">Ppro_1292</name>
</gene>
<feature type="chain" id="PRO_1000071443" description="N-(5'-phosphoribosyl)anthranilate isomerase">
    <location>
        <begin position="1"/>
        <end position="209"/>
    </location>
</feature>
<accession>A1ANJ2</accession>
<evidence type="ECO:0000255" key="1">
    <source>
        <dbReference type="HAMAP-Rule" id="MF_00135"/>
    </source>
</evidence>
<keyword id="KW-0028">Amino-acid biosynthesis</keyword>
<keyword id="KW-0057">Aromatic amino acid biosynthesis</keyword>
<keyword id="KW-0413">Isomerase</keyword>
<keyword id="KW-1185">Reference proteome</keyword>
<keyword id="KW-0822">Tryptophan biosynthesis</keyword>
<comment type="catalytic activity">
    <reaction evidence="1">
        <text>N-(5-phospho-beta-D-ribosyl)anthranilate = 1-(2-carboxyphenylamino)-1-deoxy-D-ribulose 5-phosphate</text>
        <dbReference type="Rhea" id="RHEA:21540"/>
        <dbReference type="ChEBI" id="CHEBI:18277"/>
        <dbReference type="ChEBI" id="CHEBI:58613"/>
        <dbReference type="EC" id="5.3.1.24"/>
    </reaction>
</comment>
<comment type="pathway">
    <text evidence="1">Amino-acid biosynthesis; L-tryptophan biosynthesis; L-tryptophan from chorismate: step 3/5.</text>
</comment>
<comment type="similarity">
    <text evidence="1">Belongs to the TrpF family.</text>
</comment>
<proteinExistence type="inferred from homology"/>
<reference key="1">
    <citation type="submission" date="2006-10" db="EMBL/GenBank/DDBJ databases">
        <title>Complete sequence of chromosome of Pelobacter propionicus DSM 2379.</title>
        <authorList>
            <consortium name="US DOE Joint Genome Institute"/>
            <person name="Copeland A."/>
            <person name="Lucas S."/>
            <person name="Lapidus A."/>
            <person name="Barry K."/>
            <person name="Detter J.C."/>
            <person name="Glavina del Rio T."/>
            <person name="Hammon N."/>
            <person name="Israni S."/>
            <person name="Dalin E."/>
            <person name="Tice H."/>
            <person name="Pitluck S."/>
            <person name="Saunders E."/>
            <person name="Brettin T."/>
            <person name="Bruce D."/>
            <person name="Han C."/>
            <person name="Tapia R."/>
            <person name="Schmutz J."/>
            <person name="Larimer F."/>
            <person name="Land M."/>
            <person name="Hauser L."/>
            <person name="Kyrpides N."/>
            <person name="Kim E."/>
            <person name="Lovley D."/>
            <person name="Richardson P."/>
        </authorList>
    </citation>
    <scope>NUCLEOTIDE SEQUENCE [LARGE SCALE GENOMIC DNA]</scope>
    <source>
        <strain>DSM 2379 / NBRC 103807 / OttBd1</strain>
    </source>
</reference>